<dbReference type="EMBL" id="U48416">
    <property type="protein sequence ID" value="AAC44586.1"/>
    <property type="molecule type" value="Genomic_DNA"/>
</dbReference>
<dbReference type="EMBL" id="U45323">
    <property type="protein sequence ID" value="AAC44750.1"/>
    <property type="molecule type" value="Genomic_DNA"/>
</dbReference>
<dbReference type="EMBL" id="AE000520">
    <property type="protein sequence ID" value="AAC65649.1"/>
    <property type="molecule type" value="Genomic_DNA"/>
</dbReference>
<dbReference type="PIR" id="JC5172">
    <property type="entry name" value="JC5172"/>
</dbReference>
<dbReference type="RefSeq" id="WP_010882131.1">
    <property type="nucleotide sequence ID" value="NC_021490.2"/>
</dbReference>
<dbReference type="IntAct" id="Q57321">
    <property type="interactions" value="2"/>
</dbReference>
<dbReference type="STRING" id="243276.TP_0686"/>
<dbReference type="EnsemblBacteria" id="AAC65649">
    <property type="protein sequence ID" value="AAC65649"/>
    <property type="gene ID" value="TP_0686"/>
</dbReference>
<dbReference type="KEGG" id="tpa:TP_0686"/>
<dbReference type="KEGG" id="tpw:TPANIC_0686"/>
<dbReference type="eggNOG" id="COG4211">
    <property type="taxonomic scope" value="Bacteria"/>
</dbReference>
<dbReference type="HOGENOM" id="CLU_481395_0_0_12"/>
<dbReference type="OrthoDB" id="368246at2"/>
<dbReference type="Proteomes" id="UP000000811">
    <property type="component" value="Chromosome"/>
</dbReference>
<dbReference type="GO" id="GO:0005886">
    <property type="term" value="C:plasma membrane"/>
    <property type="evidence" value="ECO:0007669"/>
    <property type="project" value="UniProtKB-SubCell"/>
</dbReference>
<dbReference type="GO" id="GO:0022857">
    <property type="term" value="F:transmembrane transporter activity"/>
    <property type="evidence" value="ECO:0007669"/>
    <property type="project" value="InterPro"/>
</dbReference>
<dbReference type="CDD" id="cd06579">
    <property type="entry name" value="TM_PBP1_transp_AraH_like"/>
    <property type="match status" value="1"/>
</dbReference>
<dbReference type="InterPro" id="IPR001851">
    <property type="entry name" value="ABC_transp_permease"/>
</dbReference>
<dbReference type="PANTHER" id="PTHR32196">
    <property type="entry name" value="ABC TRANSPORTER PERMEASE PROTEIN YPHD-RELATED-RELATED"/>
    <property type="match status" value="1"/>
</dbReference>
<dbReference type="PANTHER" id="PTHR32196:SF18">
    <property type="entry name" value="GALACTOSE_METHYL GALACTOSIDE IMPORT PERMEASE PROTEIN MGLC"/>
    <property type="match status" value="1"/>
</dbReference>
<dbReference type="Pfam" id="PF02653">
    <property type="entry name" value="BPD_transp_2"/>
    <property type="match status" value="1"/>
</dbReference>
<sequence length="531" mass="57875">MRDRTQCVAVPTQAFNEILDQDGQLTAYAQRLEQLRERGSHRVALLRGELARIRQDQVLGMPEKRVQVAAHRLKISEAQAVARQCKTEETQLVRKAVARVRGLFRDFDCSVRDAMREQRLLLKQVATVQHTSASSDQREHCLAQLRQCKEARHHAYRSLVEKSAALRNGKMTFIERVVRALREYSFNFDATQFFLANGLYIAIAVFFIACIVVAPFSGNGNLLTIPNILTILEQSSVRMFYAVGVAGIILLAGTDLSIGRMVAMGSVVTGIILHPGQNIVTFFGLGPWDFTPVPMAVRVVMSLAVSVALCVSFSLFAGFFSARLKIHPFISTLATQLIIYGVLFFGTSGTPVGSIDPYIKDLFGGRWILGTMQGTLVTFPKLIIPATIAVAIAWFIWNKTILGKNMYAVGGNAEAANVSGISVFGVTMSVFAMAAVFYGFGAFFETFKANASAGTGQGYELDAIASCVVGGISFNGGIGKLEGAVVGVIIFTGLTYCLTFLGIDTNLQFVFKGLIIIAAVALDSVKYLKRR</sequence>
<organism>
    <name type="scientific">Treponema pallidum (strain Nichols)</name>
    <dbReference type="NCBI Taxonomy" id="243276"/>
    <lineage>
        <taxon>Bacteria</taxon>
        <taxon>Pseudomonadati</taxon>
        <taxon>Spirochaetota</taxon>
        <taxon>Spirochaetia</taxon>
        <taxon>Spirochaetales</taxon>
        <taxon>Treponemataceae</taxon>
        <taxon>Treponema</taxon>
    </lineage>
</organism>
<proteinExistence type="inferred from homology"/>
<protein>
    <recommendedName>
        <fullName evidence="1">Galactose/methyl galactoside import permease protein MglC</fullName>
    </recommendedName>
</protein>
<reference key="1">
    <citation type="journal article" date="1996" name="Gene">
        <title>A mgl-like operon in Treponema pallidum, the syphilis spirochete.</title>
        <authorList>
            <person name="Porcella S.F."/>
            <person name="Popova T.G."/>
            <person name="Hagman K.E."/>
            <person name="Penn C.W."/>
            <person name="Radolf J.D."/>
            <person name="Norgard M.V."/>
        </authorList>
    </citation>
    <scope>NUCLEOTIDE SEQUENCE [GENOMIC DNA]</scope>
    <source>
        <strain>Nichols</strain>
    </source>
</reference>
<reference key="2">
    <citation type="journal article" date="1996" name="DNA Seq.">
        <title>Identification and sequences of the Treponema pallidum mglA and mglC genes.</title>
        <authorList>
            <person name="Stamm L.V."/>
            <person name="Young N.R."/>
            <person name="Frye J.G."/>
            <person name="Hardham J.M."/>
        </authorList>
    </citation>
    <scope>NUCLEOTIDE SEQUENCE [GENOMIC DNA]</scope>
    <source>
        <strain>Nichols</strain>
    </source>
</reference>
<reference key="3">
    <citation type="journal article" date="1998" name="Science">
        <title>Complete genome sequence of Treponema pallidum, the syphilis spirochete.</title>
        <authorList>
            <person name="Fraser C.M."/>
            <person name="Norris S.J."/>
            <person name="Weinstock G.M."/>
            <person name="White O."/>
            <person name="Sutton G.G."/>
            <person name="Dodson R.J."/>
            <person name="Gwinn M.L."/>
            <person name="Hickey E.K."/>
            <person name="Clayton R.A."/>
            <person name="Ketchum K.A."/>
            <person name="Sodergren E."/>
            <person name="Hardham J.M."/>
            <person name="McLeod M.P."/>
            <person name="Salzberg S.L."/>
            <person name="Peterson J.D."/>
            <person name="Khalak H.G."/>
            <person name="Richardson D.L."/>
            <person name="Howell J.K."/>
            <person name="Chidambaram M."/>
            <person name="Utterback T.R."/>
            <person name="McDonald L.A."/>
            <person name="Artiach P."/>
            <person name="Bowman C."/>
            <person name="Cotton M.D."/>
            <person name="Fujii C."/>
            <person name="Garland S.A."/>
            <person name="Hatch B."/>
            <person name="Horst K."/>
            <person name="Roberts K.M."/>
            <person name="Sandusky M."/>
            <person name="Weidman J.F."/>
            <person name="Smith H.O."/>
            <person name="Venter J.C."/>
        </authorList>
    </citation>
    <scope>NUCLEOTIDE SEQUENCE [LARGE SCALE GENOMIC DNA]</scope>
    <source>
        <strain>Nichols</strain>
    </source>
</reference>
<evidence type="ECO:0000250" key="1">
    <source>
        <dbReference type="UniProtKB" id="P23200"/>
    </source>
</evidence>
<evidence type="ECO:0000255" key="2"/>
<evidence type="ECO:0000305" key="3"/>
<comment type="function">
    <text evidence="1">Part of the ABC transporter complex MglABC involved in galactose/methyl galactoside import. Probably responsible for the translocation of the substrate across the membrane.</text>
</comment>
<comment type="subunit">
    <text evidence="1">The complex is composed of one ATP-binding protein (MglA), two transmembrane proteins (MglC) and a solute-binding protein (MglB).</text>
</comment>
<comment type="subcellular location">
    <subcellularLocation>
        <location evidence="3">Cell membrane</location>
        <topology evidence="2">Multi-pass membrane protein</topology>
    </subcellularLocation>
</comment>
<comment type="similarity">
    <text evidence="3">Belongs to the binding-protein-dependent transport system permease family. AraH/RbsC subfamily.</text>
</comment>
<feature type="chain" id="PRO_0000060109" description="Galactose/methyl galactoside import permease protein MglC">
    <location>
        <begin position="1"/>
        <end position="531"/>
    </location>
</feature>
<feature type="transmembrane region" description="Helical" evidence="2">
    <location>
        <begin position="193"/>
        <end position="213"/>
    </location>
</feature>
<feature type="transmembrane region" description="Helical" evidence="2">
    <location>
        <begin position="239"/>
        <end position="259"/>
    </location>
</feature>
<feature type="transmembrane region" description="Helical" evidence="2">
    <location>
        <begin position="267"/>
        <end position="287"/>
    </location>
</feature>
<feature type="transmembrane region" description="Helical" evidence="2">
    <location>
        <begin position="300"/>
        <end position="320"/>
    </location>
</feature>
<feature type="transmembrane region" description="Helical" evidence="2">
    <location>
        <begin position="326"/>
        <end position="346"/>
    </location>
</feature>
<feature type="transmembrane region" description="Helical" evidence="2">
    <location>
        <begin position="376"/>
        <end position="396"/>
    </location>
</feature>
<feature type="transmembrane region" description="Helical" evidence="2">
    <location>
        <begin position="424"/>
        <end position="444"/>
    </location>
</feature>
<feature type="transmembrane region" description="Helical" evidence="2">
    <location>
        <begin position="461"/>
        <end position="481"/>
    </location>
</feature>
<feature type="transmembrane region" description="Helical" evidence="2">
    <location>
        <begin position="483"/>
        <end position="503"/>
    </location>
</feature>
<feature type="transmembrane region" description="Helical" evidence="2">
    <location>
        <begin position="505"/>
        <end position="525"/>
    </location>
</feature>
<gene>
    <name type="primary">mglC</name>
    <name type="ordered locus">TP_0686</name>
</gene>
<keyword id="KW-1003">Cell membrane</keyword>
<keyword id="KW-0472">Membrane</keyword>
<keyword id="KW-1185">Reference proteome</keyword>
<keyword id="KW-0762">Sugar transport</keyword>
<keyword id="KW-0812">Transmembrane</keyword>
<keyword id="KW-1133">Transmembrane helix</keyword>
<keyword id="KW-0813">Transport</keyword>
<name>MGLC_TREPA</name>
<accession>Q57321</accession>